<evidence type="ECO:0000255" key="1">
    <source>
        <dbReference type="HAMAP-Rule" id="MF_01338"/>
    </source>
</evidence>
<gene>
    <name evidence="1" type="primary">rbcL</name>
</gene>
<name>RBL_DETCO</name>
<comment type="function">
    <text evidence="1">RuBisCO catalyzes two reactions: the carboxylation of D-ribulose 1,5-bisphosphate, the primary event in carbon dioxide fixation, as well as the oxidative fragmentation of the pentose substrate in the photorespiration process. Both reactions occur simultaneously and in competition at the same active site.</text>
</comment>
<comment type="catalytic activity">
    <reaction evidence="1">
        <text>2 (2R)-3-phosphoglycerate + 2 H(+) = D-ribulose 1,5-bisphosphate + CO2 + H2O</text>
        <dbReference type="Rhea" id="RHEA:23124"/>
        <dbReference type="ChEBI" id="CHEBI:15377"/>
        <dbReference type="ChEBI" id="CHEBI:15378"/>
        <dbReference type="ChEBI" id="CHEBI:16526"/>
        <dbReference type="ChEBI" id="CHEBI:57870"/>
        <dbReference type="ChEBI" id="CHEBI:58272"/>
        <dbReference type="EC" id="4.1.1.39"/>
    </reaction>
</comment>
<comment type="catalytic activity">
    <reaction evidence="1">
        <text>D-ribulose 1,5-bisphosphate + O2 = 2-phosphoglycolate + (2R)-3-phosphoglycerate + 2 H(+)</text>
        <dbReference type="Rhea" id="RHEA:36631"/>
        <dbReference type="ChEBI" id="CHEBI:15378"/>
        <dbReference type="ChEBI" id="CHEBI:15379"/>
        <dbReference type="ChEBI" id="CHEBI:57870"/>
        <dbReference type="ChEBI" id="CHEBI:58033"/>
        <dbReference type="ChEBI" id="CHEBI:58272"/>
    </reaction>
</comment>
<comment type="cofactor">
    <cofactor evidence="1">
        <name>Mg(2+)</name>
        <dbReference type="ChEBI" id="CHEBI:18420"/>
    </cofactor>
    <text evidence="1">Binds 1 Mg(2+) ion per subunit.</text>
</comment>
<comment type="subunit">
    <text evidence="1">Heterohexadecamer of 8 large chains and 8 small chains.</text>
</comment>
<comment type="subcellular location">
    <subcellularLocation>
        <location>Plastid</location>
        <location>Chloroplast</location>
    </subcellularLocation>
</comment>
<comment type="miscellaneous">
    <text evidence="1">The basic functional RuBisCO is composed of a large chain homodimer in a 'head-to-tail' conformation. In form I RuBisCO this homodimer is arranged in a barrel-like tetramer with the small subunits forming a tetrameric 'cap' on each end of the 'barrel'.</text>
</comment>
<comment type="similarity">
    <text evidence="1">Belongs to the RuBisCO large chain family. Type I subfamily.</text>
</comment>
<keyword id="KW-0113">Calvin cycle</keyword>
<keyword id="KW-0120">Carbon dioxide fixation</keyword>
<keyword id="KW-0150">Chloroplast</keyword>
<keyword id="KW-0456">Lyase</keyword>
<keyword id="KW-0460">Magnesium</keyword>
<keyword id="KW-0479">Metal-binding</keyword>
<keyword id="KW-0503">Monooxygenase</keyword>
<keyword id="KW-0560">Oxidoreductase</keyword>
<keyword id="KW-0601">Photorespiration</keyword>
<keyword id="KW-0602">Photosynthesis</keyword>
<keyword id="KW-0934">Plastid</keyword>
<dbReference type="EC" id="4.1.1.39" evidence="1"/>
<dbReference type="EMBL" id="AB018006">
    <property type="protein sequence ID" value="BAA75792.1"/>
    <property type="molecule type" value="Genomic_DNA"/>
</dbReference>
<dbReference type="SMR" id="O98945"/>
<dbReference type="GO" id="GO:0009507">
    <property type="term" value="C:chloroplast"/>
    <property type="evidence" value="ECO:0007669"/>
    <property type="project" value="UniProtKB-SubCell"/>
</dbReference>
<dbReference type="GO" id="GO:0000287">
    <property type="term" value="F:magnesium ion binding"/>
    <property type="evidence" value="ECO:0007669"/>
    <property type="project" value="UniProtKB-UniRule"/>
</dbReference>
<dbReference type="GO" id="GO:0004497">
    <property type="term" value="F:monooxygenase activity"/>
    <property type="evidence" value="ECO:0007669"/>
    <property type="project" value="UniProtKB-KW"/>
</dbReference>
<dbReference type="GO" id="GO:0016984">
    <property type="term" value="F:ribulose-bisphosphate carboxylase activity"/>
    <property type="evidence" value="ECO:0007669"/>
    <property type="project" value="UniProtKB-UniRule"/>
</dbReference>
<dbReference type="GO" id="GO:0019253">
    <property type="term" value="P:reductive pentose-phosphate cycle"/>
    <property type="evidence" value="ECO:0007669"/>
    <property type="project" value="UniProtKB-UniRule"/>
</dbReference>
<dbReference type="CDD" id="cd08212">
    <property type="entry name" value="RuBisCO_large_I"/>
    <property type="match status" value="1"/>
</dbReference>
<dbReference type="Gene3D" id="3.20.20.110">
    <property type="entry name" value="Ribulose bisphosphate carboxylase, large subunit, C-terminal domain"/>
    <property type="match status" value="1"/>
</dbReference>
<dbReference type="Gene3D" id="3.30.70.150">
    <property type="entry name" value="RuBisCO large subunit, N-terminal domain"/>
    <property type="match status" value="1"/>
</dbReference>
<dbReference type="HAMAP" id="MF_01338">
    <property type="entry name" value="RuBisCO_L_type1"/>
    <property type="match status" value="1"/>
</dbReference>
<dbReference type="InterPro" id="IPR033966">
    <property type="entry name" value="RuBisCO"/>
</dbReference>
<dbReference type="InterPro" id="IPR020878">
    <property type="entry name" value="RuBisCo_large_chain_AS"/>
</dbReference>
<dbReference type="InterPro" id="IPR000685">
    <property type="entry name" value="RuBisCO_lsu_C"/>
</dbReference>
<dbReference type="InterPro" id="IPR036376">
    <property type="entry name" value="RuBisCO_lsu_C_sf"/>
</dbReference>
<dbReference type="InterPro" id="IPR017443">
    <property type="entry name" value="RuBisCO_lsu_fd_N"/>
</dbReference>
<dbReference type="InterPro" id="IPR036422">
    <property type="entry name" value="RuBisCO_lsu_N_sf"/>
</dbReference>
<dbReference type="InterPro" id="IPR020888">
    <property type="entry name" value="RuBisCO_lsuI"/>
</dbReference>
<dbReference type="NCBIfam" id="NF003252">
    <property type="entry name" value="PRK04208.1"/>
    <property type="match status" value="1"/>
</dbReference>
<dbReference type="PANTHER" id="PTHR42704">
    <property type="entry name" value="RIBULOSE BISPHOSPHATE CARBOXYLASE"/>
    <property type="match status" value="1"/>
</dbReference>
<dbReference type="PANTHER" id="PTHR42704:SF17">
    <property type="entry name" value="RIBULOSE BISPHOSPHATE CARBOXYLASE LARGE CHAIN"/>
    <property type="match status" value="1"/>
</dbReference>
<dbReference type="Pfam" id="PF00016">
    <property type="entry name" value="RuBisCO_large"/>
    <property type="match status" value="1"/>
</dbReference>
<dbReference type="Pfam" id="PF02788">
    <property type="entry name" value="RuBisCO_large_N"/>
    <property type="match status" value="1"/>
</dbReference>
<dbReference type="SFLD" id="SFLDG01052">
    <property type="entry name" value="RuBisCO"/>
    <property type="match status" value="1"/>
</dbReference>
<dbReference type="SFLD" id="SFLDS00014">
    <property type="entry name" value="RuBisCO"/>
    <property type="match status" value="1"/>
</dbReference>
<dbReference type="SFLD" id="SFLDG00301">
    <property type="entry name" value="RuBisCO-like_proteins"/>
    <property type="match status" value="1"/>
</dbReference>
<dbReference type="SUPFAM" id="SSF51649">
    <property type="entry name" value="RuBisCo, C-terminal domain"/>
    <property type="match status" value="1"/>
</dbReference>
<dbReference type="SUPFAM" id="SSF54966">
    <property type="entry name" value="RuBisCO, large subunit, small (N-terminal) domain"/>
    <property type="match status" value="1"/>
</dbReference>
<dbReference type="PROSITE" id="PS00157">
    <property type="entry name" value="RUBISCO_LARGE"/>
    <property type="match status" value="1"/>
</dbReference>
<geneLocation type="chloroplast"/>
<organism>
    <name type="scientific">Detonula confervacea</name>
    <name type="common">Marine diatom</name>
    <dbReference type="NCBI Taxonomy" id="83371"/>
    <lineage>
        <taxon>Eukaryota</taxon>
        <taxon>Sar</taxon>
        <taxon>Stramenopiles</taxon>
        <taxon>Ochrophyta</taxon>
        <taxon>Bacillariophyta</taxon>
        <taxon>Coscinodiscophyceae</taxon>
        <taxon>Thalassiosirophycidae</taxon>
        <taxon>Thalassiosirales</taxon>
        <taxon>Thalassiosiraceae</taxon>
        <taxon>Detonula</taxon>
    </lineage>
</organism>
<protein>
    <recommendedName>
        <fullName evidence="1">Ribulose bisphosphate carboxylase large chain</fullName>
        <shortName evidence="1">RuBisCO large subunit</shortName>
        <ecNumber evidence="1">4.1.1.39</ecNumber>
    </recommendedName>
</protein>
<reference key="1">
    <citation type="submission" date="1998-09" db="EMBL/GenBank/DDBJ databases">
        <title>Structure and function study of ribulose-1,5-bisphosphate carboxylase/oxygenase of the marine diatom, Detonula confervacea.</title>
        <authorList>
            <person name="Tomizawa K."/>
        </authorList>
    </citation>
    <scope>NUCLEOTIDE SEQUENCE [GENOMIC DNA]</scope>
</reference>
<accession>O98945</accession>
<feature type="chain" id="PRO_0000062441" description="Ribulose bisphosphate carboxylase large chain">
    <location>
        <begin position="1"/>
        <end position="490"/>
    </location>
</feature>
<feature type="active site" description="Proton acceptor" evidence="1">
    <location>
        <position position="179"/>
    </location>
</feature>
<feature type="active site" description="Proton acceptor" evidence="1">
    <location>
        <position position="297"/>
    </location>
</feature>
<feature type="binding site" description="in homodimeric partner" evidence="1">
    <location>
        <position position="127"/>
    </location>
    <ligand>
        <name>substrate</name>
    </ligand>
</feature>
<feature type="binding site" evidence="1">
    <location>
        <position position="177"/>
    </location>
    <ligand>
        <name>substrate</name>
    </ligand>
</feature>
<feature type="binding site" evidence="1">
    <location>
        <position position="181"/>
    </location>
    <ligand>
        <name>substrate</name>
    </ligand>
</feature>
<feature type="binding site" description="via carbamate group" evidence="1">
    <location>
        <position position="205"/>
    </location>
    <ligand>
        <name>Mg(2+)</name>
        <dbReference type="ChEBI" id="CHEBI:18420"/>
    </ligand>
</feature>
<feature type="binding site" evidence="1">
    <location>
        <position position="207"/>
    </location>
    <ligand>
        <name>Mg(2+)</name>
        <dbReference type="ChEBI" id="CHEBI:18420"/>
    </ligand>
</feature>
<feature type="binding site" evidence="1">
    <location>
        <position position="208"/>
    </location>
    <ligand>
        <name>Mg(2+)</name>
        <dbReference type="ChEBI" id="CHEBI:18420"/>
    </ligand>
</feature>
<feature type="binding site" evidence="1">
    <location>
        <position position="298"/>
    </location>
    <ligand>
        <name>substrate</name>
    </ligand>
</feature>
<feature type="binding site" evidence="1">
    <location>
        <position position="330"/>
    </location>
    <ligand>
        <name>substrate</name>
    </ligand>
</feature>
<feature type="binding site" evidence="1">
    <location>
        <position position="382"/>
    </location>
    <ligand>
        <name>substrate</name>
    </ligand>
</feature>
<feature type="site" description="Transition state stabilizer" evidence="1">
    <location>
        <position position="337"/>
    </location>
</feature>
<feature type="modified residue" description="N6-carboxylysine" evidence="1">
    <location>
        <position position="205"/>
    </location>
</feature>
<proteinExistence type="inferred from homology"/>
<sequence length="490" mass="54256">MSQSVSERTRIKSDRYESGVIPYAKMGYWDAAYSVKDTDILALFRITPQPGVDPVEAAAAVAGESSTATWTVVWTDLLTACERYRAKAYRVDPVPNATDVYFAFIAYECDLFEEASLSNLTASIIGNVFGFKAISALRLEDMRIPHSYLKTFQGPATGIIVERERLNKYGTPLLGATVKPKLGLSGKNYGRVVYEGLKGGLDFLKDDENINSQPFMRWRERFLNCLEGINRASAATGEVKGSYLNITAATMEEVYKRAEYAKAIGSVVVMIDLVMGYTAIQSIAYWARENDMLLHLHRAGNSTYARQKNHGINFRVICKWMRMSGVDHIHAGTVVGKLEGDPLMIKGFYDILRLTELEVNLPFGIFFEMDWASLRRCMPVASGGIHCGQMHQLIHYLGDDVVLQFGGGTIGHPDGIQAGATANRVALEAMVFSRNEGADYFNNQVGPQILRDAAKTCGPLQTALDLWKDISFNYTSTDTADFAETATANR</sequence>